<accession>Q98CN5</accession>
<comment type="function">
    <text evidence="1">Component of the acetyl coenzyme A carboxylase (ACC) complex. Biotin carboxylase (BC) catalyzes the carboxylation of biotin on its carrier protein (BCCP) and then the CO(2) group is transferred by the transcarboxylase to acetyl-CoA to form malonyl-CoA.</text>
</comment>
<comment type="catalytic activity">
    <reaction evidence="1">
        <text>N(6)-carboxybiotinyl-L-lysyl-[protein] + acetyl-CoA = N(6)-biotinyl-L-lysyl-[protein] + malonyl-CoA</text>
        <dbReference type="Rhea" id="RHEA:54728"/>
        <dbReference type="Rhea" id="RHEA-COMP:10505"/>
        <dbReference type="Rhea" id="RHEA-COMP:10506"/>
        <dbReference type="ChEBI" id="CHEBI:57288"/>
        <dbReference type="ChEBI" id="CHEBI:57384"/>
        <dbReference type="ChEBI" id="CHEBI:83144"/>
        <dbReference type="ChEBI" id="CHEBI:83145"/>
        <dbReference type="EC" id="2.1.3.15"/>
    </reaction>
</comment>
<comment type="pathway">
    <text evidence="1">Lipid metabolism; malonyl-CoA biosynthesis; malonyl-CoA from acetyl-CoA: step 1/1.</text>
</comment>
<comment type="subunit">
    <text evidence="1">Acetyl-CoA carboxylase is a heterohexamer composed of biotin carboxyl carrier protein (AccB), biotin carboxylase (AccC) and two subunits each of ACCase subunit alpha (AccA) and ACCase subunit beta (AccD).</text>
</comment>
<comment type="subcellular location">
    <subcellularLocation>
        <location evidence="1">Cytoplasm</location>
    </subcellularLocation>
</comment>
<comment type="similarity">
    <text evidence="1">Belongs to the AccD/PCCB family.</text>
</comment>
<evidence type="ECO:0000255" key="1">
    <source>
        <dbReference type="HAMAP-Rule" id="MF_01395"/>
    </source>
</evidence>
<evidence type="ECO:0000255" key="2">
    <source>
        <dbReference type="PROSITE-ProRule" id="PRU01136"/>
    </source>
</evidence>
<keyword id="KW-0067">ATP-binding</keyword>
<keyword id="KW-0963">Cytoplasm</keyword>
<keyword id="KW-0275">Fatty acid biosynthesis</keyword>
<keyword id="KW-0276">Fatty acid metabolism</keyword>
<keyword id="KW-0444">Lipid biosynthesis</keyword>
<keyword id="KW-0443">Lipid metabolism</keyword>
<keyword id="KW-0547">Nucleotide-binding</keyword>
<keyword id="KW-0808">Transferase</keyword>
<proteinExistence type="inferred from homology"/>
<dbReference type="EC" id="2.1.3.15" evidence="1"/>
<dbReference type="EMBL" id="BA000012">
    <property type="protein sequence ID" value="BAB51586.1"/>
    <property type="molecule type" value="Genomic_DNA"/>
</dbReference>
<dbReference type="RefSeq" id="WP_010912925.1">
    <property type="nucleotide sequence ID" value="NC_002678.2"/>
</dbReference>
<dbReference type="SMR" id="Q98CN5"/>
<dbReference type="GeneID" id="66680712"/>
<dbReference type="KEGG" id="mlo:mlr5075"/>
<dbReference type="eggNOG" id="COG0777">
    <property type="taxonomic scope" value="Bacteria"/>
</dbReference>
<dbReference type="HOGENOM" id="CLU_015486_1_0_5"/>
<dbReference type="UniPathway" id="UPA00655">
    <property type="reaction ID" value="UER00711"/>
</dbReference>
<dbReference type="Proteomes" id="UP000000552">
    <property type="component" value="Chromosome"/>
</dbReference>
<dbReference type="GO" id="GO:0009329">
    <property type="term" value="C:acetate CoA-transferase complex"/>
    <property type="evidence" value="ECO:0007669"/>
    <property type="project" value="TreeGrafter"/>
</dbReference>
<dbReference type="GO" id="GO:0003989">
    <property type="term" value="F:acetyl-CoA carboxylase activity"/>
    <property type="evidence" value="ECO:0007669"/>
    <property type="project" value="InterPro"/>
</dbReference>
<dbReference type="GO" id="GO:0005524">
    <property type="term" value="F:ATP binding"/>
    <property type="evidence" value="ECO:0007669"/>
    <property type="project" value="UniProtKB-KW"/>
</dbReference>
<dbReference type="GO" id="GO:0016743">
    <property type="term" value="F:carboxyl- or carbamoyltransferase activity"/>
    <property type="evidence" value="ECO:0007669"/>
    <property type="project" value="UniProtKB-UniRule"/>
</dbReference>
<dbReference type="GO" id="GO:0006633">
    <property type="term" value="P:fatty acid biosynthetic process"/>
    <property type="evidence" value="ECO:0007669"/>
    <property type="project" value="UniProtKB-KW"/>
</dbReference>
<dbReference type="GO" id="GO:2001295">
    <property type="term" value="P:malonyl-CoA biosynthetic process"/>
    <property type="evidence" value="ECO:0007669"/>
    <property type="project" value="UniProtKB-UniRule"/>
</dbReference>
<dbReference type="Gene3D" id="3.90.226.10">
    <property type="entry name" value="2-enoyl-CoA Hydratase, Chain A, domain 1"/>
    <property type="match status" value="1"/>
</dbReference>
<dbReference type="HAMAP" id="MF_01395">
    <property type="entry name" value="AcetylCoA_CT_beta"/>
    <property type="match status" value="1"/>
</dbReference>
<dbReference type="InterPro" id="IPR034733">
    <property type="entry name" value="AcCoA_carboxyl_beta"/>
</dbReference>
<dbReference type="InterPro" id="IPR000438">
    <property type="entry name" value="Acetyl_CoA_COase_Trfase_b_su"/>
</dbReference>
<dbReference type="InterPro" id="IPR029045">
    <property type="entry name" value="ClpP/crotonase-like_dom_sf"/>
</dbReference>
<dbReference type="InterPro" id="IPR011762">
    <property type="entry name" value="COA_CT_N"/>
</dbReference>
<dbReference type="NCBIfam" id="TIGR00515">
    <property type="entry name" value="accD"/>
    <property type="match status" value="1"/>
</dbReference>
<dbReference type="PANTHER" id="PTHR42995">
    <property type="entry name" value="ACETYL-COENZYME A CARBOXYLASE CARBOXYL TRANSFERASE SUBUNIT BETA, CHLOROPLASTIC"/>
    <property type="match status" value="1"/>
</dbReference>
<dbReference type="PANTHER" id="PTHR42995:SF5">
    <property type="entry name" value="ACETYL-COENZYME A CARBOXYLASE CARBOXYL TRANSFERASE SUBUNIT BETA, CHLOROPLASTIC"/>
    <property type="match status" value="1"/>
</dbReference>
<dbReference type="Pfam" id="PF01039">
    <property type="entry name" value="Carboxyl_trans"/>
    <property type="match status" value="1"/>
</dbReference>
<dbReference type="PRINTS" id="PR01070">
    <property type="entry name" value="ACCCTRFRASEB"/>
</dbReference>
<dbReference type="SUPFAM" id="SSF52096">
    <property type="entry name" value="ClpP/crotonase"/>
    <property type="match status" value="1"/>
</dbReference>
<dbReference type="PROSITE" id="PS50980">
    <property type="entry name" value="COA_CT_NTER"/>
    <property type="match status" value="1"/>
</dbReference>
<name>ACCD_RHILO</name>
<protein>
    <recommendedName>
        <fullName evidence="1">Acetyl-coenzyme A carboxylase carboxyl transferase subunit beta</fullName>
        <shortName evidence="1">ACCase subunit beta</shortName>
        <shortName evidence="1">Acetyl-CoA carboxylase carboxyltransferase subunit beta</shortName>
        <ecNumber evidence="1">2.1.3.15</ecNumber>
    </recommendedName>
</protein>
<feature type="chain" id="PRO_0000389829" description="Acetyl-coenzyme A carboxylase carboxyl transferase subunit beta">
    <location>
        <begin position="1"/>
        <end position="308"/>
    </location>
</feature>
<feature type="domain" description="CoA carboxyltransferase N-terminal" evidence="2">
    <location>
        <begin position="26"/>
        <end position="295"/>
    </location>
</feature>
<gene>
    <name evidence="1" type="primary">accD</name>
    <name type="ordered locus">mlr5075</name>
</gene>
<organism>
    <name type="scientific">Mesorhizobium japonicum (strain LMG 29417 / CECT 9101 / MAFF 303099)</name>
    <name type="common">Mesorhizobium loti (strain MAFF 303099)</name>
    <dbReference type="NCBI Taxonomy" id="266835"/>
    <lineage>
        <taxon>Bacteria</taxon>
        <taxon>Pseudomonadati</taxon>
        <taxon>Pseudomonadota</taxon>
        <taxon>Alphaproteobacteria</taxon>
        <taxon>Hyphomicrobiales</taxon>
        <taxon>Phyllobacteriaceae</taxon>
        <taxon>Mesorhizobium</taxon>
    </lineage>
</organism>
<reference key="1">
    <citation type="journal article" date="2000" name="DNA Res.">
        <title>Complete genome structure of the nitrogen-fixing symbiotic bacterium Mesorhizobium loti.</title>
        <authorList>
            <person name="Kaneko T."/>
            <person name="Nakamura Y."/>
            <person name="Sato S."/>
            <person name="Asamizu E."/>
            <person name="Kato T."/>
            <person name="Sasamoto S."/>
            <person name="Watanabe A."/>
            <person name="Idesawa K."/>
            <person name="Ishikawa A."/>
            <person name="Kawashima K."/>
            <person name="Kimura T."/>
            <person name="Kishida Y."/>
            <person name="Kiyokawa C."/>
            <person name="Kohara M."/>
            <person name="Matsumoto M."/>
            <person name="Matsuno A."/>
            <person name="Mochizuki Y."/>
            <person name="Nakayama S."/>
            <person name="Nakazaki N."/>
            <person name="Shimpo S."/>
            <person name="Sugimoto M."/>
            <person name="Takeuchi C."/>
            <person name="Yamada M."/>
            <person name="Tabata S."/>
        </authorList>
    </citation>
    <scope>NUCLEOTIDE SEQUENCE [LARGE SCALE GENOMIC DNA]</scope>
    <source>
        <strain>LMG 29417 / CECT 9101 / MAFF 303099</strain>
    </source>
</reference>
<sequence>MNWITNYVRPKINSMLGRRTDMPENLWIKDPETGEMVFHKDLESNQFVIPSSGHHMKISAKERLKYFLDDGRYEQLENPKVVLDPLKFRDEKRYTDRLKDAKAKTGLEDAIVNALGTIEGLPVVVTVQDFAFMGGSLGMAAGDAIVHAFEVALQRKRPLILFAASGGARMQEGILSLMQLPRTTVGVDRLKEAGLPYIVVLTNPTTGGVTASYAMLGDVHIAEPGALIGFAGPRVIEQTIREKLPDGFQRSEYLMEHGMVDMVVSRLEMRQTIARLLKMLLKMPGEQKPLEPEILPPAVVAAEARPQA</sequence>